<protein>
    <recommendedName>
        <fullName evidence="1">Small ribosomal subunit protein uS13</fullName>
    </recommendedName>
    <alternativeName>
        <fullName evidence="2">30S ribosomal protein S13</fullName>
    </alternativeName>
</protein>
<comment type="function">
    <text evidence="1">Located at the top of the head of the 30S subunit, it contacts several helices of the 16S rRNA. In the 70S ribosome it contacts the 23S rRNA (bridge B1a) and protein L5 of the 50S subunit (bridge B1b), connecting the 2 subunits; these bridges are implicated in subunit movement. Contacts the tRNAs in the A and P-sites.</text>
</comment>
<comment type="subunit">
    <text evidence="1">Part of the 30S ribosomal subunit. Forms a loose heterodimer with protein S19. Forms two bridges to the 50S subunit in the 70S ribosome.</text>
</comment>
<comment type="similarity">
    <text evidence="1">Belongs to the universal ribosomal protein uS13 family.</text>
</comment>
<accession>A8GPC8</accession>
<proteinExistence type="inferred from homology"/>
<sequence>MARIASVNIPDNKRLVVSLTYVYGLGPAMAAEICNKAKISKDKKAKELTDQELISLRNIIESEYKVEGDLRREVTLNIKKKKDIRCYQGLRHIRKLPVRGQNTHSNARTRKGKAIAIAGKKKAVK</sequence>
<organism>
    <name type="scientific">Rickettsia akari (strain Hartford)</name>
    <dbReference type="NCBI Taxonomy" id="293614"/>
    <lineage>
        <taxon>Bacteria</taxon>
        <taxon>Pseudomonadati</taxon>
        <taxon>Pseudomonadota</taxon>
        <taxon>Alphaproteobacteria</taxon>
        <taxon>Rickettsiales</taxon>
        <taxon>Rickettsiaceae</taxon>
        <taxon>Rickettsieae</taxon>
        <taxon>Rickettsia</taxon>
        <taxon>spotted fever group</taxon>
    </lineage>
</organism>
<gene>
    <name evidence="1" type="primary">rpsM</name>
    <name type="ordered locus">A1C_04995</name>
</gene>
<name>RS13_RICAH</name>
<keyword id="KW-0687">Ribonucleoprotein</keyword>
<keyword id="KW-0689">Ribosomal protein</keyword>
<keyword id="KW-0694">RNA-binding</keyword>
<keyword id="KW-0699">rRNA-binding</keyword>
<keyword id="KW-0820">tRNA-binding</keyword>
<dbReference type="EMBL" id="CP000847">
    <property type="protein sequence ID" value="ABV75253.1"/>
    <property type="molecule type" value="Genomic_DNA"/>
</dbReference>
<dbReference type="RefSeq" id="WP_012149883.1">
    <property type="nucleotide sequence ID" value="NC_009881.1"/>
</dbReference>
<dbReference type="SMR" id="A8GPC8"/>
<dbReference type="STRING" id="293614.A1C_04995"/>
<dbReference type="KEGG" id="rak:A1C_04995"/>
<dbReference type="eggNOG" id="COG0099">
    <property type="taxonomic scope" value="Bacteria"/>
</dbReference>
<dbReference type="HOGENOM" id="CLU_103849_1_2_5"/>
<dbReference type="Proteomes" id="UP000006830">
    <property type="component" value="Chromosome"/>
</dbReference>
<dbReference type="GO" id="GO:0005829">
    <property type="term" value="C:cytosol"/>
    <property type="evidence" value="ECO:0007669"/>
    <property type="project" value="TreeGrafter"/>
</dbReference>
<dbReference type="GO" id="GO:0015935">
    <property type="term" value="C:small ribosomal subunit"/>
    <property type="evidence" value="ECO:0007669"/>
    <property type="project" value="TreeGrafter"/>
</dbReference>
<dbReference type="GO" id="GO:0019843">
    <property type="term" value="F:rRNA binding"/>
    <property type="evidence" value="ECO:0007669"/>
    <property type="project" value="UniProtKB-UniRule"/>
</dbReference>
<dbReference type="GO" id="GO:0003735">
    <property type="term" value="F:structural constituent of ribosome"/>
    <property type="evidence" value="ECO:0007669"/>
    <property type="project" value="InterPro"/>
</dbReference>
<dbReference type="GO" id="GO:0000049">
    <property type="term" value="F:tRNA binding"/>
    <property type="evidence" value="ECO:0007669"/>
    <property type="project" value="UniProtKB-UniRule"/>
</dbReference>
<dbReference type="GO" id="GO:0006412">
    <property type="term" value="P:translation"/>
    <property type="evidence" value="ECO:0007669"/>
    <property type="project" value="UniProtKB-UniRule"/>
</dbReference>
<dbReference type="FunFam" id="1.10.8.50:FF:000001">
    <property type="entry name" value="30S ribosomal protein S13"/>
    <property type="match status" value="1"/>
</dbReference>
<dbReference type="Gene3D" id="1.10.8.50">
    <property type="match status" value="1"/>
</dbReference>
<dbReference type="Gene3D" id="4.10.910.10">
    <property type="entry name" value="30s ribosomal protein s13, domain 2"/>
    <property type="match status" value="1"/>
</dbReference>
<dbReference type="HAMAP" id="MF_01315">
    <property type="entry name" value="Ribosomal_uS13"/>
    <property type="match status" value="1"/>
</dbReference>
<dbReference type="InterPro" id="IPR027437">
    <property type="entry name" value="Rbsml_uS13_C"/>
</dbReference>
<dbReference type="InterPro" id="IPR001892">
    <property type="entry name" value="Ribosomal_uS13"/>
</dbReference>
<dbReference type="InterPro" id="IPR010979">
    <property type="entry name" value="Ribosomal_uS13-like_H2TH"/>
</dbReference>
<dbReference type="InterPro" id="IPR019980">
    <property type="entry name" value="Ribosomal_uS13_bac-type"/>
</dbReference>
<dbReference type="InterPro" id="IPR018269">
    <property type="entry name" value="Ribosomal_uS13_CS"/>
</dbReference>
<dbReference type="NCBIfam" id="TIGR03631">
    <property type="entry name" value="uS13_bact"/>
    <property type="match status" value="1"/>
</dbReference>
<dbReference type="PANTHER" id="PTHR10871">
    <property type="entry name" value="30S RIBOSOMAL PROTEIN S13/40S RIBOSOMAL PROTEIN S18"/>
    <property type="match status" value="1"/>
</dbReference>
<dbReference type="PANTHER" id="PTHR10871:SF1">
    <property type="entry name" value="SMALL RIBOSOMAL SUBUNIT PROTEIN US13M"/>
    <property type="match status" value="1"/>
</dbReference>
<dbReference type="Pfam" id="PF00416">
    <property type="entry name" value="Ribosomal_S13"/>
    <property type="match status" value="1"/>
</dbReference>
<dbReference type="PIRSF" id="PIRSF002134">
    <property type="entry name" value="Ribosomal_S13"/>
    <property type="match status" value="1"/>
</dbReference>
<dbReference type="SUPFAM" id="SSF46946">
    <property type="entry name" value="S13-like H2TH domain"/>
    <property type="match status" value="1"/>
</dbReference>
<dbReference type="PROSITE" id="PS00646">
    <property type="entry name" value="RIBOSOMAL_S13_1"/>
    <property type="match status" value="1"/>
</dbReference>
<dbReference type="PROSITE" id="PS50159">
    <property type="entry name" value="RIBOSOMAL_S13_2"/>
    <property type="match status" value="1"/>
</dbReference>
<feature type="chain" id="PRO_1000051887" description="Small ribosomal subunit protein uS13">
    <location>
        <begin position="1"/>
        <end position="125"/>
    </location>
</feature>
<reference key="1">
    <citation type="submission" date="2007-09" db="EMBL/GenBank/DDBJ databases">
        <title>Complete genome sequence of Rickettsia akari.</title>
        <authorList>
            <person name="Madan A."/>
            <person name="Fahey J."/>
            <person name="Helton E."/>
            <person name="Ketteman M."/>
            <person name="Madan A."/>
            <person name="Rodrigues S."/>
            <person name="Sanchez A."/>
            <person name="Whiting M."/>
            <person name="Dasch G."/>
            <person name="Eremeeva M."/>
        </authorList>
    </citation>
    <scope>NUCLEOTIDE SEQUENCE [LARGE SCALE GENOMIC DNA]</scope>
    <source>
        <strain>Hartford</strain>
    </source>
</reference>
<evidence type="ECO:0000255" key="1">
    <source>
        <dbReference type="HAMAP-Rule" id="MF_01315"/>
    </source>
</evidence>
<evidence type="ECO:0000305" key="2"/>